<reference key="1">
    <citation type="journal article" date="2008" name="Appl. Environ. Microbiol.">
        <title>Genome of the epsilonproteobacterial chemolithoautotroph Sulfurimonas denitrificans.</title>
        <authorList>
            <person name="Sievert S.M."/>
            <person name="Scott K.M."/>
            <person name="Klotz M.G."/>
            <person name="Chain P.S.G."/>
            <person name="Hauser L.J."/>
            <person name="Hemp J."/>
            <person name="Huegler M."/>
            <person name="Land M."/>
            <person name="Lapidus A."/>
            <person name="Larimer F.W."/>
            <person name="Lucas S."/>
            <person name="Malfatti S.A."/>
            <person name="Meyer F."/>
            <person name="Paulsen I.T."/>
            <person name="Ren Q."/>
            <person name="Simon J."/>
            <person name="Bailey K."/>
            <person name="Diaz E."/>
            <person name="Fitzpatrick K.A."/>
            <person name="Glover B."/>
            <person name="Gwatney N."/>
            <person name="Korajkic A."/>
            <person name="Long A."/>
            <person name="Mobberley J.M."/>
            <person name="Pantry S.N."/>
            <person name="Pazder G."/>
            <person name="Peterson S."/>
            <person name="Quintanilla J.D."/>
            <person name="Sprinkle R."/>
            <person name="Stephens J."/>
            <person name="Thomas P."/>
            <person name="Vaughn R."/>
            <person name="Weber M.J."/>
            <person name="Wooten L.L."/>
        </authorList>
    </citation>
    <scope>NUCLEOTIDE SEQUENCE [LARGE SCALE GENOMIC DNA]</scope>
    <source>
        <strain>ATCC 33889 / DSM 1251</strain>
    </source>
</reference>
<feature type="chain" id="PRO_0000382154" description="ATP synthase subunit delta">
    <location>
        <begin position="1"/>
        <end position="177"/>
    </location>
</feature>
<organism>
    <name type="scientific">Sulfurimonas denitrificans (strain ATCC 33889 / DSM 1251)</name>
    <name type="common">Thiomicrospira denitrificans (strain ATCC 33889 / DSM 1251)</name>
    <dbReference type="NCBI Taxonomy" id="326298"/>
    <lineage>
        <taxon>Bacteria</taxon>
        <taxon>Pseudomonadati</taxon>
        <taxon>Campylobacterota</taxon>
        <taxon>Epsilonproteobacteria</taxon>
        <taxon>Campylobacterales</taxon>
        <taxon>Sulfurimonadaceae</taxon>
        <taxon>Sulfurimonas</taxon>
    </lineage>
</organism>
<comment type="function">
    <text evidence="1">F(1)F(0) ATP synthase produces ATP from ADP in the presence of a proton or sodium gradient. F-type ATPases consist of two structural domains, F(1) containing the extramembraneous catalytic core and F(0) containing the membrane proton channel, linked together by a central stalk and a peripheral stalk. During catalysis, ATP synthesis in the catalytic domain of F(1) is coupled via a rotary mechanism of the central stalk subunits to proton translocation.</text>
</comment>
<comment type="function">
    <text evidence="1">This protein is part of the stalk that links CF(0) to CF(1). It either transmits conformational changes from CF(0) to CF(1) or is implicated in proton conduction.</text>
</comment>
<comment type="subunit">
    <text evidence="1">F-type ATPases have 2 components, F(1) - the catalytic core - and F(0) - the membrane proton channel. F(1) has five subunits: alpha(3), beta(3), gamma(1), delta(1), epsilon(1). F(0) has three main subunits: a(1), b(2) and c(10-14). The alpha and beta chains form an alternating ring which encloses part of the gamma chain. F(1) is attached to F(0) by a central stalk formed by the gamma and epsilon chains, while a peripheral stalk is formed by the delta and b chains.</text>
</comment>
<comment type="subcellular location">
    <subcellularLocation>
        <location evidence="1">Cell inner membrane</location>
        <topology evidence="1">Peripheral membrane protein</topology>
    </subcellularLocation>
</comment>
<comment type="similarity">
    <text evidence="1">Belongs to the ATPase delta chain family.</text>
</comment>
<protein>
    <recommendedName>
        <fullName evidence="1">ATP synthase subunit delta</fullName>
    </recommendedName>
    <alternativeName>
        <fullName evidence="1">ATP synthase F(1) sector subunit delta</fullName>
    </alternativeName>
    <alternativeName>
        <fullName evidence="1">F-type ATPase subunit delta</fullName>
        <shortName evidence="1">F-ATPase subunit delta</shortName>
    </alternativeName>
</protein>
<evidence type="ECO:0000255" key="1">
    <source>
        <dbReference type="HAMAP-Rule" id="MF_01416"/>
    </source>
</evidence>
<keyword id="KW-0066">ATP synthesis</keyword>
<keyword id="KW-0997">Cell inner membrane</keyword>
<keyword id="KW-1003">Cell membrane</keyword>
<keyword id="KW-0139">CF(1)</keyword>
<keyword id="KW-0375">Hydrogen ion transport</keyword>
<keyword id="KW-0406">Ion transport</keyword>
<keyword id="KW-0472">Membrane</keyword>
<keyword id="KW-1185">Reference proteome</keyword>
<keyword id="KW-0813">Transport</keyword>
<accession>Q30QP8</accession>
<sequence>MEELIAKRYLKAIKQGSNAESMREIALIFSILSEAFNDKKFIQIINNPDVSRDQKSEILLAAVKSAGYKEVENLIKLLAEHNRIEIIPAIAEVMRKDIAKTNRVYSGVVYSDSVVDSKVMEDLGNGLGSRFNSKISLKFVKDNFNGIKVDVEDLGVEISFSKARINTQMIEHIIKAI</sequence>
<name>ATPD_SULDN</name>
<dbReference type="EMBL" id="CP000153">
    <property type="protein sequence ID" value="ABB44683.1"/>
    <property type="molecule type" value="Genomic_DNA"/>
</dbReference>
<dbReference type="RefSeq" id="WP_011373035.1">
    <property type="nucleotide sequence ID" value="NC_007575.1"/>
</dbReference>
<dbReference type="SMR" id="Q30QP8"/>
<dbReference type="STRING" id="326298.Suden_1406"/>
<dbReference type="KEGG" id="tdn:Suden_1406"/>
<dbReference type="eggNOG" id="COG0712">
    <property type="taxonomic scope" value="Bacteria"/>
</dbReference>
<dbReference type="HOGENOM" id="CLU_085114_3_1_7"/>
<dbReference type="OrthoDB" id="5339308at2"/>
<dbReference type="Proteomes" id="UP000002714">
    <property type="component" value="Chromosome"/>
</dbReference>
<dbReference type="GO" id="GO:0005886">
    <property type="term" value="C:plasma membrane"/>
    <property type="evidence" value="ECO:0007669"/>
    <property type="project" value="UniProtKB-SubCell"/>
</dbReference>
<dbReference type="GO" id="GO:0045259">
    <property type="term" value="C:proton-transporting ATP synthase complex"/>
    <property type="evidence" value="ECO:0007669"/>
    <property type="project" value="UniProtKB-KW"/>
</dbReference>
<dbReference type="GO" id="GO:0046933">
    <property type="term" value="F:proton-transporting ATP synthase activity, rotational mechanism"/>
    <property type="evidence" value="ECO:0007669"/>
    <property type="project" value="UniProtKB-UniRule"/>
</dbReference>
<dbReference type="Gene3D" id="1.10.520.20">
    <property type="entry name" value="N-terminal domain of the delta subunit of the F1F0-ATP synthase"/>
    <property type="match status" value="1"/>
</dbReference>
<dbReference type="HAMAP" id="MF_01416">
    <property type="entry name" value="ATP_synth_delta_bact"/>
    <property type="match status" value="1"/>
</dbReference>
<dbReference type="InterPro" id="IPR026015">
    <property type="entry name" value="ATP_synth_OSCP/delta_N_sf"/>
</dbReference>
<dbReference type="InterPro" id="IPR000711">
    <property type="entry name" value="ATPase_OSCP/dsu"/>
</dbReference>
<dbReference type="NCBIfam" id="NF006291">
    <property type="entry name" value="PRK08474.1"/>
    <property type="match status" value="1"/>
</dbReference>
<dbReference type="Pfam" id="PF00213">
    <property type="entry name" value="OSCP"/>
    <property type="match status" value="1"/>
</dbReference>
<dbReference type="SUPFAM" id="SSF47928">
    <property type="entry name" value="N-terminal domain of the delta subunit of the F1F0-ATP synthase"/>
    <property type="match status" value="1"/>
</dbReference>
<proteinExistence type="inferred from homology"/>
<gene>
    <name evidence="1" type="primary">atpH</name>
    <name type="ordered locus">Suden_1406</name>
</gene>